<gene>
    <name type="primary">STRN</name>
</gene>
<protein>
    <recommendedName>
        <fullName>Striatin</fullName>
    </recommendedName>
</protein>
<name>STRN_HUMAN</name>
<accession>O43815</accession>
<accession>Q3KP65</accession>
<accession>Q53TQ8</accession>
<accession>Q9NP38</accession>
<evidence type="ECO:0000250" key="1">
    <source>
        <dbReference type="UniProtKB" id="O55106"/>
    </source>
</evidence>
<evidence type="ECO:0000250" key="2">
    <source>
        <dbReference type="UniProtKB" id="P70483"/>
    </source>
</evidence>
<evidence type="ECO:0000255" key="3"/>
<evidence type="ECO:0000256" key="4">
    <source>
        <dbReference type="SAM" id="MobiDB-lite"/>
    </source>
</evidence>
<evidence type="ECO:0000269" key="5">
    <source>
    </source>
</evidence>
<evidence type="ECO:0000269" key="6">
    <source>
    </source>
</evidence>
<evidence type="ECO:0000303" key="7">
    <source>
    </source>
</evidence>
<evidence type="ECO:0000305" key="8"/>
<evidence type="ECO:0000305" key="9">
    <source>
    </source>
</evidence>
<evidence type="ECO:0007744" key="10">
    <source>
    </source>
</evidence>
<evidence type="ECO:0007744" key="11">
    <source>
    </source>
</evidence>
<evidence type="ECO:0007744" key="12">
    <source>
    </source>
</evidence>
<evidence type="ECO:0007744" key="13">
    <source>
    </source>
</evidence>
<evidence type="ECO:0007744" key="14">
    <source>
    </source>
</evidence>
<feature type="chain" id="PRO_0000051232" description="Striatin">
    <location>
        <begin position="1"/>
        <end position="780"/>
    </location>
</feature>
<feature type="repeat" description="WD 1" evidence="3">
    <location>
        <begin position="461"/>
        <end position="500"/>
    </location>
</feature>
<feature type="repeat" description="WD 2" evidence="3">
    <location>
        <begin position="514"/>
        <end position="553"/>
    </location>
</feature>
<feature type="repeat" description="WD 3" evidence="3">
    <location>
        <begin position="567"/>
        <end position="606"/>
    </location>
</feature>
<feature type="repeat" description="WD 4" evidence="3">
    <location>
        <begin position="662"/>
        <end position="701"/>
    </location>
</feature>
<feature type="repeat" description="WD 5" evidence="3">
    <location>
        <begin position="704"/>
        <end position="743"/>
    </location>
</feature>
<feature type="repeat" description="WD 6" evidence="3">
    <location>
        <begin position="750"/>
        <end position="780"/>
    </location>
</feature>
<feature type="region of interest" description="Caveolin-binding" evidence="3">
    <location>
        <begin position="55"/>
        <end position="63"/>
    </location>
</feature>
<feature type="region of interest" description="Disordered" evidence="4">
    <location>
        <begin position="124"/>
        <end position="150"/>
    </location>
</feature>
<feature type="region of interest" description="Calmodulin-binding" evidence="3">
    <location>
        <begin position="149"/>
        <end position="166"/>
    </location>
</feature>
<feature type="region of interest" description="Disordered" evidence="4">
    <location>
        <begin position="289"/>
        <end position="310"/>
    </location>
</feature>
<feature type="region of interest" description="Disordered" evidence="4">
    <location>
        <begin position="365"/>
        <end position="387"/>
    </location>
</feature>
<feature type="coiled-coil region" evidence="3">
    <location>
        <begin position="53"/>
        <end position="120"/>
    </location>
</feature>
<feature type="compositionally biased region" description="Basic and acidic residues" evidence="4">
    <location>
        <begin position="299"/>
        <end position="310"/>
    </location>
</feature>
<feature type="modified residue" description="Phosphoserine" evidence="1">
    <location>
        <position position="137"/>
    </location>
</feature>
<feature type="modified residue" description="Phosphothreonine" evidence="1">
    <location>
        <position position="225"/>
    </location>
</feature>
<feature type="modified residue" description="Phosphoserine" evidence="13">
    <location>
        <position position="227"/>
    </location>
</feature>
<feature type="modified residue" description="Phosphoserine" evidence="13">
    <location>
        <position position="229"/>
    </location>
</feature>
<feature type="modified residue" description="Phosphoserine" evidence="10 11 12 13 14">
    <location>
        <position position="245"/>
    </location>
</feature>
<feature type="modified residue" description="Phosphoserine" evidence="13">
    <location>
        <position position="259"/>
    </location>
</feature>
<feature type="splice variant" id="VSP_023495" description="In isoform 2." evidence="7">
    <location>
        <begin position="29"/>
        <end position="40"/>
    </location>
</feature>
<feature type="splice variant" id="VSP_023496" description="In isoform 2." evidence="7">
    <original>EKEDQCLMPEAWNVDQGVITKLKEQYKKERKGKKGVKR</original>
    <variation>G</variation>
    <location>
        <begin position="311"/>
        <end position="348"/>
    </location>
</feature>
<feature type="sequence conflict" description="In Ref. 1; CAA11560." evidence="8" ref="1">
    <original>S</original>
    <variation>I</variation>
    <location>
        <position position="191"/>
    </location>
</feature>
<feature type="sequence conflict" description="In Ref. 1; CAA11560." evidence="8" ref="1">
    <original>L</original>
    <variation>P</variation>
    <location>
        <position position="423"/>
    </location>
</feature>
<feature type="sequence conflict" description="In Ref. 1; CAA11560." evidence="8" ref="1">
    <original>T</original>
    <variation>I</variation>
    <location>
        <position position="611"/>
    </location>
</feature>
<feature type="sequence conflict" description="In Ref. 1; CAA11560." evidence="8" ref="1">
    <original>P</original>
    <variation>S</variation>
    <location>
        <position position="677"/>
    </location>
</feature>
<keyword id="KW-0025">Alternative splicing</keyword>
<keyword id="KW-0112">Calmodulin-binding</keyword>
<keyword id="KW-0966">Cell projection</keyword>
<keyword id="KW-0175">Coiled coil</keyword>
<keyword id="KW-0963">Cytoplasm</keyword>
<keyword id="KW-0472">Membrane</keyword>
<keyword id="KW-0597">Phosphoprotein</keyword>
<keyword id="KW-1267">Proteomics identification</keyword>
<keyword id="KW-1185">Reference proteome</keyword>
<keyword id="KW-0677">Repeat</keyword>
<keyword id="KW-0770">Synapse</keyword>
<keyword id="KW-0853">WD repeat</keyword>
<dbReference type="EMBL" id="AJ223814">
    <property type="protein sequence ID" value="CAA11560.1"/>
    <property type="molecule type" value="mRNA"/>
</dbReference>
<dbReference type="EMBL" id="AC007404">
    <property type="protein sequence ID" value="AAY24273.1"/>
    <property type="molecule type" value="Genomic_DNA"/>
</dbReference>
<dbReference type="EMBL" id="AC007382">
    <property type="protein sequence ID" value="AAF66162.1"/>
    <property type="molecule type" value="Genomic_DNA"/>
</dbReference>
<dbReference type="EMBL" id="BC106879">
    <property type="protein sequence ID" value="AAI06880.1"/>
    <property type="molecule type" value="mRNA"/>
</dbReference>
<dbReference type="CCDS" id="CCDS1784.1">
    <molecule id="O43815-1"/>
</dbReference>
<dbReference type="RefSeq" id="NP_003153.2">
    <molecule id="O43815-1"/>
    <property type="nucleotide sequence ID" value="NM_003162.4"/>
</dbReference>
<dbReference type="SMR" id="O43815"/>
<dbReference type="BioGRID" id="112674">
    <property type="interactions" value="146"/>
</dbReference>
<dbReference type="ComplexPortal" id="CPX-8604">
    <property type="entry name" value="STRIPAK complex, STRIP1-STRN variant"/>
</dbReference>
<dbReference type="ComplexPortal" id="CPX-8605">
    <property type="entry name" value="STRIPAK complex, STRIP2-STRN variant"/>
</dbReference>
<dbReference type="CORUM" id="O43815"/>
<dbReference type="ELM" id="O43815"/>
<dbReference type="FunCoup" id="O43815">
    <property type="interactions" value="1560"/>
</dbReference>
<dbReference type="IntAct" id="O43815">
    <property type="interactions" value="109"/>
</dbReference>
<dbReference type="MINT" id="O43815"/>
<dbReference type="STRING" id="9606.ENSP00000263918"/>
<dbReference type="iPTMnet" id="O43815"/>
<dbReference type="PhosphoSitePlus" id="O43815"/>
<dbReference type="SwissPalm" id="O43815"/>
<dbReference type="BioMuta" id="STRN"/>
<dbReference type="CPTAC" id="CPTAC-1640"/>
<dbReference type="CPTAC" id="CPTAC-1724"/>
<dbReference type="CPTAC" id="CPTAC-1725"/>
<dbReference type="CPTAC" id="CPTAC-1737"/>
<dbReference type="jPOST" id="O43815"/>
<dbReference type="MassIVE" id="O43815"/>
<dbReference type="PaxDb" id="9606-ENSP00000263918"/>
<dbReference type="PeptideAtlas" id="O43815"/>
<dbReference type="ProteomicsDB" id="49179">
    <molecule id="O43815-1"/>
</dbReference>
<dbReference type="ProteomicsDB" id="49180">
    <molecule id="O43815-2"/>
</dbReference>
<dbReference type="Pumba" id="O43815"/>
<dbReference type="Antibodypedia" id="2791">
    <property type="antibodies" value="187 antibodies from 28 providers"/>
</dbReference>
<dbReference type="DNASU" id="6801"/>
<dbReference type="Ensembl" id="ENST00000263918.9">
    <molecule id="O43815-1"/>
    <property type="protein sequence ID" value="ENSP00000263918.4"/>
    <property type="gene ID" value="ENSG00000115808.13"/>
</dbReference>
<dbReference type="GeneID" id="6801"/>
<dbReference type="KEGG" id="hsa:6801"/>
<dbReference type="MANE-Select" id="ENST00000263918.9">
    <property type="protein sequence ID" value="ENSP00000263918.4"/>
    <property type="RefSeq nucleotide sequence ID" value="NM_003162.4"/>
    <property type="RefSeq protein sequence ID" value="NP_003153.2"/>
</dbReference>
<dbReference type="UCSC" id="uc002rpn.4">
    <molecule id="O43815-1"/>
    <property type="organism name" value="human"/>
</dbReference>
<dbReference type="AGR" id="HGNC:11424"/>
<dbReference type="CTD" id="6801"/>
<dbReference type="DisGeNET" id="6801"/>
<dbReference type="GeneCards" id="STRN"/>
<dbReference type="HGNC" id="HGNC:11424">
    <property type="gene designation" value="STRN"/>
</dbReference>
<dbReference type="HPA" id="ENSG00000115808">
    <property type="expression patterns" value="Low tissue specificity"/>
</dbReference>
<dbReference type="MIM" id="614765">
    <property type="type" value="gene"/>
</dbReference>
<dbReference type="neXtProt" id="NX_O43815"/>
<dbReference type="OpenTargets" id="ENSG00000115808"/>
<dbReference type="PharmGKB" id="PA36224"/>
<dbReference type="VEuPathDB" id="HostDB:ENSG00000115808"/>
<dbReference type="eggNOG" id="KOG0642">
    <property type="taxonomic scope" value="Eukaryota"/>
</dbReference>
<dbReference type="GeneTree" id="ENSGT00950000183095"/>
<dbReference type="HOGENOM" id="CLU_009108_2_0_1"/>
<dbReference type="InParanoid" id="O43815"/>
<dbReference type="OMA" id="KTDLMRR"/>
<dbReference type="OrthoDB" id="727118at2759"/>
<dbReference type="PAN-GO" id="O43815">
    <property type="GO annotations" value="5 GO annotations based on evolutionary models"/>
</dbReference>
<dbReference type="PhylomeDB" id="O43815"/>
<dbReference type="TreeFam" id="TF313387"/>
<dbReference type="PathwayCommons" id="O43815"/>
<dbReference type="Reactome" id="R-HSA-1257604">
    <property type="pathway name" value="PIP3 activates AKT signaling"/>
</dbReference>
<dbReference type="Reactome" id="R-HSA-2219530">
    <property type="pathway name" value="Constitutive Signaling by Aberrant PI3K in Cancer"/>
</dbReference>
<dbReference type="Reactome" id="R-HSA-6811558">
    <property type="pathway name" value="PI5P, PP2A and IER3 Regulate PI3K/AKT Signaling"/>
</dbReference>
<dbReference type="Reactome" id="R-HSA-9009391">
    <property type="pathway name" value="Extra-nuclear estrogen signaling"/>
</dbReference>
<dbReference type="Reactome" id="R-HSA-9673766">
    <property type="pathway name" value="Signaling by cytosolic PDGFRA and PDGFRB fusion proteins"/>
</dbReference>
<dbReference type="Reactome" id="R-HSA-9700645">
    <property type="pathway name" value="ALK mutants bind TKIs"/>
</dbReference>
<dbReference type="Reactome" id="R-HSA-9725370">
    <property type="pathway name" value="Signaling by ALK fusions and activated point mutants"/>
</dbReference>
<dbReference type="SignaLink" id="O43815"/>
<dbReference type="SIGNOR" id="O43815"/>
<dbReference type="BioGRID-ORCS" id="6801">
    <property type="hits" value="252 hits in 1151 CRISPR screens"/>
</dbReference>
<dbReference type="CD-CODE" id="91857CE7">
    <property type="entry name" value="Nucleolus"/>
</dbReference>
<dbReference type="ChiTaRS" id="STRN">
    <property type="organism name" value="human"/>
</dbReference>
<dbReference type="GeneWiki" id="STRN"/>
<dbReference type="GenomeRNAi" id="6801"/>
<dbReference type="Pharos" id="O43815">
    <property type="development level" value="Tbio"/>
</dbReference>
<dbReference type="PRO" id="PR:O43815"/>
<dbReference type="Proteomes" id="UP000005640">
    <property type="component" value="Chromosome 2"/>
</dbReference>
<dbReference type="RNAct" id="O43815">
    <property type="molecule type" value="protein"/>
</dbReference>
<dbReference type="Bgee" id="ENSG00000115808">
    <property type="expression patterns" value="Expressed in endothelial cell and 188 other cell types or tissues"/>
</dbReference>
<dbReference type="GO" id="GO:0005923">
    <property type="term" value="C:bicellular tight junction"/>
    <property type="evidence" value="ECO:0000314"/>
    <property type="project" value="UniProtKB"/>
</dbReference>
<dbReference type="GO" id="GO:0005829">
    <property type="term" value="C:cytosol"/>
    <property type="evidence" value="ECO:0000304"/>
    <property type="project" value="Reactome"/>
</dbReference>
<dbReference type="GO" id="GO:0030425">
    <property type="term" value="C:dendrite"/>
    <property type="evidence" value="ECO:0000318"/>
    <property type="project" value="GO_Central"/>
</dbReference>
<dbReference type="GO" id="GO:0043197">
    <property type="term" value="C:dendritic spine"/>
    <property type="evidence" value="ECO:0000250"/>
    <property type="project" value="UniProtKB"/>
</dbReference>
<dbReference type="GO" id="GO:0090443">
    <property type="term" value="C:FAR/SIN/STRIPAK complex"/>
    <property type="evidence" value="ECO:0000314"/>
    <property type="project" value="UniProtKB"/>
</dbReference>
<dbReference type="GO" id="GO:0016020">
    <property type="term" value="C:membrane"/>
    <property type="evidence" value="ECO:0000250"/>
    <property type="project" value="UniProtKB"/>
</dbReference>
<dbReference type="GO" id="GO:0043025">
    <property type="term" value="C:neuronal cell body"/>
    <property type="evidence" value="ECO:0000250"/>
    <property type="project" value="UniProtKB"/>
</dbReference>
<dbReference type="GO" id="GO:0014069">
    <property type="term" value="C:postsynaptic density"/>
    <property type="evidence" value="ECO:0000250"/>
    <property type="project" value="UniProtKB"/>
</dbReference>
<dbReference type="GO" id="GO:0045211">
    <property type="term" value="C:postsynaptic membrane"/>
    <property type="evidence" value="ECO:0000250"/>
    <property type="project" value="UniProtKB"/>
</dbReference>
<dbReference type="GO" id="GO:0070016">
    <property type="term" value="F:armadillo repeat domain binding"/>
    <property type="evidence" value="ECO:0000353"/>
    <property type="project" value="UniProtKB"/>
</dbReference>
<dbReference type="GO" id="GO:0005516">
    <property type="term" value="F:calmodulin binding"/>
    <property type="evidence" value="ECO:0000250"/>
    <property type="project" value="UniProtKB"/>
</dbReference>
<dbReference type="GO" id="GO:0030331">
    <property type="term" value="F:nuclear estrogen receptor binding"/>
    <property type="evidence" value="ECO:0000353"/>
    <property type="project" value="UniProtKB"/>
</dbReference>
<dbReference type="GO" id="GO:0051721">
    <property type="term" value="F:protein phosphatase 2A binding"/>
    <property type="evidence" value="ECO:0000314"/>
    <property type="project" value="UniProtKB"/>
</dbReference>
<dbReference type="GO" id="GO:0044877">
    <property type="term" value="F:protein-containing complex binding"/>
    <property type="evidence" value="ECO:0000314"/>
    <property type="project" value="UniProtKB"/>
</dbReference>
<dbReference type="GO" id="GO:0070830">
    <property type="term" value="P:bicellular tight junction assembly"/>
    <property type="evidence" value="ECO:0000303"/>
    <property type="project" value="UniProtKB"/>
</dbReference>
<dbReference type="GO" id="GO:0016358">
    <property type="term" value="P:dendrite development"/>
    <property type="evidence" value="ECO:0000250"/>
    <property type="project" value="UniProtKB"/>
</dbReference>
<dbReference type="GO" id="GO:0007626">
    <property type="term" value="P:locomotory behavior"/>
    <property type="evidence" value="ECO:0000250"/>
    <property type="project" value="UniProtKB"/>
</dbReference>
<dbReference type="GO" id="GO:0008285">
    <property type="term" value="P:negative regulation of cell population proliferation"/>
    <property type="evidence" value="ECO:0000315"/>
    <property type="project" value="UniProtKB"/>
</dbReference>
<dbReference type="GO" id="GO:0009966">
    <property type="term" value="P:regulation of signal transduction"/>
    <property type="evidence" value="ECO:0000318"/>
    <property type="project" value="GO_Central"/>
</dbReference>
<dbReference type="GO" id="GO:0016055">
    <property type="term" value="P:Wnt signaling pathway"/>
    <property type="evidence" value="ECO:0000315"/>
    <property type="project" value="UniProtKB"/>
</dbReference>
<dbReference type="CDD" id="cd00200">
    <property type="entry name" value="WD40"/>
    <property type="match status" value="1"/>
</dbReference>
<dbReference type="FunFam" id="2.130.10.10:FF:001505">
    <property type="entry name" value="Striatin"/>
    <property type="match status" value="1"/>
</dbReference>
<dbReference type="FunFam" id="1.20.5.300:FF:000001">
    <property type="entry name" value="striatin isoform X1"/>
    <property type="match status" value="1"/>
</dbReference>
<dbReference type="FunFam" id="2.130.10.10:FF:000079">
    <property type="entry name" value="striatin isoform X1"/>
    <property type="match status" value="1"/>
</dbReference>
<dbReference type="FunFam" id="2.130.10.10:FF:000211">
    <property type="entry name" value="striatin isoform X1"/>
    <property type="match status" value="1"/>
</dbReference>
<dbReference type="Gene3D" id="1.20.5.300">
    <property type="match status" value="1"/>
</dbReference>
<dbReference type="Gene3D" id="2.130.10.10">
    <property type="entry name" value="YVTN repeat-like/Quinoprotein amine dehydrogenase"/>
    <property type="match status" value="3"/>
</dbReference>
<dbReference type="InterPro" id="IPR020472">
    <property type="entry name" value="G-protein_beta_WD-40_rep"/>
</dbReference>
<dbReference type="InterPro" id="IPR013258">
    <property type="entry name" value="Striatin_N"/>
</dbReference>
<dbReference type="InterPro" id="IPR015943">
    <property type="entry name" value="WD40/YVTN_repeat-like_dom_sf"/>
</dbReference>
<dbReference type="InterPro" id="IPR019775">
    <property type="entry name" value="WD40_repeat_CS"/>
</dbReference>
<dbReference type="InterPro" id="IPR036322">
    <property type="entry name" value="WD40_repeat_dom_sf"/>
</dbReference>
<dbReference type="InterPro" id="IPR001680">
    <property type="entry name" value="WD40_rpt"/>
</dbReference>
<dbReference type="InterPro" id="IPR051488">
    <property type="entry name" value="WD_repeat_striatin"/>
</dbReference>
<dbReference type="PANTHER" id="PTHR15653">
    <property type="entry name" value="STRIATIN"/>
    <property type="match status" value="1"/>
</dbReference>
<dbReference type="PANTHER" id="PTHR15653:SF2">
    <property type="entry name" value="STRIATIN"/>
    <property type="match status" value="1"/>
</dbReference>
<dbReference type="Pfam" id="PF08232">
    <property type="entry name" value="Striatin"/>
    <property type="match status" value="1"/>
</dbReference>
<dbReference type="Pfam" id="PF00400">
    <property type="entry name" value="WD40"/>
    <property type="match status" value="5"/>
</dbReference>
<dbReference type="PRINTS" id="PR00320">
    <property type="entry name" value="GPROTEINBRPT"/>
</dbReference>
<dbReference type="SMART" id="SM00320">
    <property type="entry name" value="WD40"/>
    <property type="match status" value="6"/>
</dbReference>
<dbReference type="SUPFAM" id="SSF50978">
    <property type="entry name" value="WD40 repeat-like"/>
    <property type="match status" value="1"/>
</dbReference>
<dbReference type="PROSITE" id="PS00678">
    <property type="entry name" value="WD_REPEATS_1"/>
    <property type="match status" value="4"/>
</dbReference>
<dbReference type="PROSITE" id="PS50082">
    <property type="entry name" value="WD_REPEATS_2"/>
    <property type="match status" value="4"/>
</dbReference>
<dbReference type="PROSITE" id="PS50294">
    <property type="entry name" value="WD_REPEATS_REGION"/>
    <property type="match status" value="1"/>
</dbReference>
<proteinExistence type="evidence at protein level"/>
<comment type="function">
    <text evidence="5 9">Calmodulin-binding scaffolding protein which is the center of the striatin-interacting phosphatase and kinase (STRIPAK) complexes (PubMed:18782753). STRIPAK complexes have critical roles in protein (de)phosphorylation and are regulators of multiple signaling pathways including Hippo, MAPK, nuclear receptor and cytoskeleton remodeling. Different types of STRIPAK complexes are involved in a variety of biological processes such as cell growth, differentiation, apoptosis, metabolism and immune regulation (Probable).</text>
</comment>
<comment type="subunit">
    <text evidence="2 5">Part of the core of STRIPAK complexes composed of PP2A catalytic and scaffolding subunits, the striatins (PP2A regulatory subunits), the striatin-associated proteins MOB4, STRIP1 and STRIP2, PDCD10 and members of the STE20 kinases, such as STK24 and STK26 (PubMed:18782753). Interacts with CTTNBP2; this interaction may regulate dendritic spine distribution of STRN. Activation of glutamate receptors weakens the interaction with CTTNBP2 (By similarity).</text>
</comment>
<comment type="interaction">
    <interactant intactId="EBI-1046642">
        <id>O43815</id>
    </interactant>
    <interactant intactId="EBI-1774273">
        <id>Q9P2B4</id>
        <label>CTTNBP2NL</label>
    </interactant>
    <organismsDiffer>false</organismsDiffer>
    <experiments>8</experiments>
</comment>
<comment type="interaction">
    <interactant intactId="EBI-1046642">
        <id>O43815</id>
    </interactant>
    <interactant intactId="EBI-713935">
        <id>Q9Y3A3</id>
        <label>MOB4</label>
    </interactant>
    <organismsDiffer>false</organismsDiffer>
    <experiments>7</experiments>
</comment>
<comment type="interaction">
    <interactant intactId="EBI-1046642">
        <id>O43815</id>
    </interactant>
    <interactant intactId="EBI-740195">
        <id>Q9BUL8</id>
        <label>PDCD10</label>
    </interactant>
    <organismsDiffer>false</organismsDiffer>
    <experiments>7</experiments>
</comment>
<comment type="interaction">
    <interactant intactId="EBI-1046642">
        <id>O43815</id>
    </interactant>
    <interactant intactId="EBI-712311">
        <id>P67775</id>
        <label>PPP2CA</label>
    </interactant>
    <organismsDiffer>false</organismsDiffer>
    <experiments>7</experiments>
</comment>
<comment type="interaction">
    <interactant intactId="EBI-1046642">
        <id>O43815</id>
    </interactant>
    <interactant intactId="EBI-302388">
        <id>P30153</id>
        <label>PPP2R1A</label>
    </interactant>
    <organismsDiffer>false</organismsDiffer>
    <experiments>10</experiments>
</comment>
<comment type="interaction">
    <interactant intactId="EBI-1046642">
        <id>O43815</id>
    </interactant>
    <interactant intactId="EBI-726876">
        <id>Q6NUQ1</id>
        <label>RINT1</label>
    </interactant>
    <organismsDiffer>false</organismsDiffer>
    <experiments>3</experiments>
</comment>
<comment type="interaction">
    <interactant intactId="EBI-1046642">
        <id>O43815</id>
    </interactant>
    <interactant intactId="EBI-740175">
        <id>Q9Y6E0</id>
        <label>STK24</label>
    </interactant>
    <organismsDiffer>false</organismsDiffer>
    <experiments>6</experiments>
</comment>
<comment type="interaction">
    <interactant intactId="EBI-1046642">
        <id>O43815</id>
    </interactant>
    <interactant intactId="EBI-618295">
        <id>O00506</id>
        <label>STK25</label>
    </interactant>
    <organismsDiffer>false</organismsDiffer>
    <experiments>7</experiments>
</comment>
<comment type="interaction">
    <interactant intactId="EBI-1046642">
        <id>O43815</id>
    </interactant>
    <interactant intactId="EBI-1053857">
        <id>Q13033</id>
        <label>STRN3</label>
    </interactant>
    <organismsDiffer>false</organismsDiffer>
    <experiments>12</experiments>
</comment>
<comment type="interaction">
    <interactant intactId="EBI-1046642">
        <id>O43815</id>
    </interactant>
    <interactant intactId="EBI-1105213">
        <id>Q9UBB9</id>
        <label>TFIP11</label>
    </interactant>
    <organismsDiffer>false</organismsDiffer>
    <experiments>3</experiments>
</comment>
<comment type="interaction">
    <interactant intactId="EBI-1046642">
        <id>O43815</id>
    </interactant>
    <interactant intactId="EBI-4398527">
        <id>Q9H2K2</id>
        <label>TNKS2</label>
    </interactant>
    <organismsDiffer>false</organismsDiffer>
    <experiments>2</experiments>
</comment>
<comment type="interaction">
    <interactant intactId="EBI-1046642">
        <id>O43815</id>
    </interactant>
    <interactant intactId="EBI-765817">
        <id>Q9Y228</id>
        <label>TRAF3IP3</label>
    </interactant>
    <organismsDiffer>false</organismsDiffer>
    <experiments>4</experiments>
</comment>
<comment type="interaction">
    <interactant intactId="EBI-1266294">
        <id>O43815-2</id>
    </interactant>
    <interactant intactId="EBI-740195">
        <id>Q9BUL8</id>
        <label>PDCD10</label>
    </interactant>
    <organismsDiffer>false</organismsDiffer>
    <experiments>3</experiments>
</comment>
<comment type="interaction">
    <interactant intactId="EBI-1266294">
        <id>O43815-2</id>
    </interactant>
    <interactant intactId="EBI-302388">
        <id>P30153</id>
        <label>PPP2R1A</label>
    </interactant>
    <organismsDiffer>false</organismsDiffer>
    <experiments>3</experiments>
</comment>
<comment type="subcellular location">
    <subcellularLocation>
        <location evidence="2">Cytoplasm</location>
    </subcellularLocation>
    <subcellularLocation>
        <location evidence="2">Membrane</location>
        <topology evidence="2">Peripheral membrane protein</topology>
    </subcellularLocation>
    <subcellularLocation>
        <location evidence="2">Cell projection</location>
        <location evidence="2">Dendritic spine</location>
    </subcellularLocation>
    <text evidence="2">CTTNBP2-binding may regulate dendritic spine distribution.</text>
</comment>
<comment type="alternative products">
    <event type="alternative splicing"/>
    <isoform>
        <id>O43815-1</id>
        <name>1</name>
        <sequence type="displayed"/>
    </isoform>
    <isoform>
        <id>O43815-2</id>
        <name>2</name>
        <sequence type="described" ref="VSP_023495 VSP_023496"/>
    </isoform>
</comment>
<comment type="tissue specificity">
    <text evidence="6">Preferentially expressed in brain.</text>
</comment>
<comment type="similarity">
    <text evidence="8">Belongs to the WD repeat striatin family.</text>
</comment>
<comment type="online information" name="Atlas of Genetics and Cytogenetics in Oncology and Haematology">
    <link uri="https://atlasgeneticsoncology.org/gene/44243/STRN"/>
</comment>
<organism>
    <name type="scientific">Homo sapiens</name>
    <name type="common">Human</name>
    <dbReference type="NCBI Taxonomy" id="9606"/>
    <lineage>
        <taxon>Eukaryota</taxon>
        <taxon>Metazoa</taxon>
        <taxon>Chordata</taxon>
        <taxon>Craniata</taxon>
        <taxon>Vertebrata</taxon>
        <taxon>Euteleostomi</taxon>
        <taxon>Mammalia</taxon>
        <taxon>Eutheria</taxon>
        <taxon>Euarchontoglires</taxon>
        <taxon>Primates</taxon>
        <taxon>Haplorrhini</taxon>
        <taxon>Catarrhini</taxon>
        <taxon>Hominidae</taxon>
        <taxon>Homo</taxon>
    </lineage>
</organism>
<reference key="1">
    <citation type="journal article" date="1998" name="Genomics">
        <title>Cloning of human striatin cDNA (STRN), gene mapping to 2p22-p21, and preferential expression in brain.</title>
        <authorList>
            <person name="Moqrich A."/>
            <person name="Mattei M.-G."/>
            <person name="Bartoli M."/>
            <person name="Rakitina T."/>
            <person name="Baillat G."/>
            <person name="Monneron A."/>
            <person name="Castets F."/>
        </authorList>
    </citation>
    <scope>NUCLEOTIDE SEQUENCE [MRNA] (ISOFORM 1)</scope>
    <scope>TISSUE SPECIFICITY</scope>
</reference>
<reference key="2">
    <citation type="journal article" date="2005" name="Nature">
        <title>Generation and annotation of the DNA sequences of human chromosomes 2 and 4.</title>
        <authorList>
            <person name="Hillier L.W."/>
            <person name="Graves T.A."/>
            <person name="Fulton R.S."/>
            <person name="Fulton L.A."/>
            <person name="Pepin K.H."/>
            <person name="Minx P."/>
            <person name="Wagner-McPherson C."/>
            <person name="Layman D."/>
            <person name="Wylie K."/>
            <person name="Sekhon M."/>
            <person name="Becker M.C."/>
            <person name="Fewell G.A."/>
            <person name="Delehaunty K.D."/>
            <person name="Miner T.L."/>
            <person name="Nash W.E."/>
            <person name="Kremitzki C."/>
            <person name="Oddy L."/>
            <person name="Du H."/>
            <person name="Sun H."/>
            <person name="Bradshaw-Cordum H."/>
            <person name="Ali J."/>
            <person name="Carter J."/>
            <person name="Cordes M."/>
            <person name="Harris A."/>
            <person name="Isak A."/>
            <person name="van Brunt A."/>
            <person name="Nguyen C."/>
            <person name="Du F."/>
            <person name="Courtney L."/>
            <person name="Kalicki J."/>
            <person name="Ozersky P."/>
            <person name="Abbott S."/>
            <person name="Armstrong J."/>
            <person name="Belter E.A."/>
            <person name="Caruso L."/>
            <person name="Cedroni M."/>
            <person name="Cotton M."/>
            <person name="Davidson T."/>
            <person name="Desai A."/>
            <person name="Elliott G."/>
            <person name="Erb T."/>
            <person name="Fronick C."/>
            <person name="Gaige T."/>
            <person name="Haakenson W."/>
            <person name="Haglund K."/>
            <person name="Holmes A."/>
            <person name="Harkins R."/>
            <person name="Kim K."/>
            <person name="Kruchowski S.S."/>
            <person name="Strong C.M."/>
            <person name="Grewal N."/>
            <person name="Goyea E."/>
            <person name="Hou S."/>
            <person name="Levy A."/>
            <person name="Martinka S."/>
            <person name="Mead K."/>
            <person name="McLellan M.D."/>
            <person name="Meyer R."/>
            <person name="Randall-Maher J."/>
            <person name="Tomlinson C."/>
            <person name="Dauphin-Kohlberg S."/>
            <person name="Kozlowicz-Reilly A."/>
            <person name="Shah N."/>
            <person name="Swearengen-Shahid S."/>
            <person name="Snider J."/>
            <person name="Strong J.T."/>
            <person name="Thompson J."/>
            <person name="Yoakum M."/>
            <person name="Leonard S."/>
            <person name="Pearman C."/>
            <person name="Trani L."/>
            <person name="Radionenko M."/>
            <person name="Waligorski J.E."/>
            <person name="Wang C."/>
            <person name="Rock S.M."/>
            <person name="Tin-Wollam A.-M."/>
            <person name="Maupin R."/>
            <person name="Latreille P."/>
            <person name="Wendl M.C."/>
            <person name="Yang S.-P."/>
            <person name="Pohl C."/>
            <person name="Wallis J.W."/>
            <person name="Spieth J."/>
            <person name="Bieri T.A."/>
            <person name="Berkowicz N."/>
            <person name="Nelson J.O."/>
            <person name="Osborne J."/>
            <person name="Ding L."/>
            <person name="Meyer R."/>
            <person name="Sabo A."/>
            <person name="Shotland Y."/>
            <person name="Sinha P."/>
            <person name="Wohldmann P.E."/>
            <person name="Cook L.L."/>
            <person name="Hickenbotham M.T."/>
            <person name="Eldred J."/>
            <person name="Williams D."/>
            <person name="Jones T.A."/>
            <person name="She X."/>
            <person name="Ciccarelli F.D."/>
            <person name="Izaurralde E."/>
            <person name="Taylor J."/>
            <person name="Schmutz J."/>
            <person name="Myers R.M."/>
            <person name="Cox D.R."/>
            <person name="Huang X."/>
            <person name="McPherson J.D."/>
            <person name="Mardis E.R."/>
            <person name="Clifton S.W."/>
            <person name="Warren W.C."/>
            <person name="Chinwalla A.T."/>
            <person name="Eddy S.R."/>
            <person name="Marra M.A."/>
            <person name="Ovcharenko I."/>
            <person name="Furey T.S."/>
            <person name="Miller W."/>
            <person name="Eichler E.E."/>
            <person name="Bork P."/>
            <person name="Suyama M."/>
            <person name="Torrents D."/>
            <person name="Waterston R.H."/>
            <person name="Wilson R.K."/>
        </authorList>
    </citation>
    <scope>NUCLEOTIDE SEQUENCE [LARGE SCALE GENOMIC DNA]</scope>
</reference>
<reference key="3">
    <citation type="journal article" date="2004" name="Genome Res.">
        <title>The status, quality, and expansion of the NIH full-length cDNA project: the Mammalian Gene Collection (MGC).</title>
        <authorList>
            <consortium name="The MGC Project Team"/>
        </authorList>
    </citation>
    <scope>NUCLEOTIDE SEQUENCE [LARGE SCALE MRNA] (ISOFORM 2)</scope>
</reference>
<reference key="4">
    <citation type="journal article" date="2008" name="Proc. Natl. Acad. Sci. U.S.A.">
        <title>A quantitative atlas of mitotic phosphorylation.</title>
        <authorList>
            <person name="Dephoure N."/>
            <person name="Zhou C."/>
            <person name="Villen J."/>
            <person name="Beausoleil S.A."/>
            <person name="Bakalarski C.E."/>
            <person name="Elledge S.J."/>
            <person name="Gygi S.P."/>
        </authorList>
    </citation>
    <scope>PHOSPHORYLATION [LARGE SCALE ANALYSIS] AT SER-245</scope>
    <scope>IDENTIFICATION BY MASS SPECTROMETRY [LARGE SCALE ANALYSIS]</scope>
    <source>
        <tissue>Cervix carcinoma</tissue>
    </source>
</reference>
<reference key="5">
    <citation type="journal article" date="2009" name="Anal. Chem.">
        <title>Lys-N and trypsin cover complementary parts of the phosphoproteome in a refined SCX-based approach.</title>
        <authorList>
            <person name="Gauci S."/>
            <person name="Helbig A.O."/>
            <person name="Slijper M."/>
            <person name="Krijgsveld J."/>
            <person name="Heck A.J."/>
            <person name="Mohammed S."/>
        </authorList>
    </citation>
    <scope>IDENTIFICATION BY MASS SPECTROMETRY [LARGE SCALE ANALYSIS]</scope>
</reference>
<reference key="6">
    <citation type="journal article" date="2009" name="Mol. Cell. Proteomics">
        <title>A PP2A phosphatase high density interaction network identifies a novel striatin-interacting phosphatase and kinase complex linked to the cerebral cavernous malformation 3 (CCM3) protein.</title>
        <authorList>
            <person name="Goudreault M."/>
            <person name="D'Ambrosio L.M."/>
            <person name="Kean M.J."/>
            <person name="Mullin M.J."/>
            <person name="Larsen B.G."/>
            <person name="Sanchez A."/>
            <person name="Chaudhry S."/>
            <person name="Chen G.I."/>
            <person name="Sicheri F."/>
            <person name="Nesvizhskii A.I."/>
            <person name="Aebersold R."/>
            <person name="Raught B."/>
            <person name="Gingras A.C."/>
        </authorList>
    </citation>
    <scope>IDENTIFICATION IN STRIPAK COMPLEX</scope>
    <scope>FUNCTION</scope>
</reference>
<reference key="7">
    <citation type="journal article" date="2009" name="Mol. Cell. Proteomics">
        <title>Large-scale proteomics analysis of the human kinome.</title>
        <authorList>
            <person name="Oppermann F.S."/>
            <person name="Gnad F."/>
            <person name="Olsen J.V."/>
            <person name="Hornberger R."/>
            <person name="Greff Z."/>
            <person name="Keri G."/>
            <person name="Mann M."/>
            <person name="Daub H."/>
        </authorList>
    </citation>
    <scope>PHOSPHORYLATION [LARGE SCALE ANALYSIS] AT SER-245</scope>
    <scope>IDENTIFICATION BY MASS SPECTROMETRY [LARGE SCALE ANALYSIS]</scope>
</reference>
<reference key="8">
    <citation type="journal article" date="2009" name="Sci. Signal.">
        <title>Quantitative phosphoproteomic analysis of T cell receptor signaling reveals system-wide modulation of protein-protein interactions.</title>
        <authorList>
            <person name="Mayya V."/>
            <person name="Lundgren D.H."/>
            <person name="Hwang S.-I."/>
            <person name="Rezaul K."/>
            <person name="Wu L."/>
            <person name="Eng J.K."/>
            <person name="Rodionov V."/>
            <person name="Han D.K."/>
        </authorList>
    </citation>
    <scope>PHOSPHORYLATION [LARGE SCALE ANALYSIS] AT SER-245</scope>
    <scope>IDENTIFICATION BY MASS SPECTROMETRY [LARGE SCALE ANALYSIS]</scope>
    <source>
        <tissue>Leukemic T-cell</tissue>
    </source>
</reference>
<reference key="9">
    <citation type="journal article" date="2011" name="BMC Syst. Biol.">
        <title>Initial characterization of the human central proteome.</title>
        <authorList>
            <person name="Burkard T.R."/>
            <person name="Planyavsky M."/>
            <person name="Kaupe I."/>
            <person name="Breitwieser F.P."/>
            <person name="Buerckstuemmer T."/>
            <person name="Bennett K.L."/>
            <person name="Superti-Furga G."/>
            <person name="Colinge J."/>
        </authorList>
    </citation>
    <scope>IDENTIFICATION BY MASS SPECTROMETRY [LARGE SCALE ANALYSIS]</scope>
</reference>
<reference key="10">
    <citation type="journal article" date="2013" name="J. Proteome Res.">
        <title>Toward a comprehensive characterization of a human cancer cell phosphoproteome.</title>
        <authorList>
            <person name="Zhou H."/>
            <person name="Di Palma S."/>
            <person name="Preisinger C."/>
            <person name="Peng M."/>
            <person name="Polat A.N."/>
            <person name="Heck A.J."/>
            <person name="Mohammed S."/>
        </authorList>
    </citation>
    <scope>PHOSPHORYLATION [LARGE SCALE ANALYSIS] AT SER-227; SER-229; SER-245 AND SER-259</scope>
    <scope>IDENTIFICATION BY MASS SPECTROMETRY [LARGE SCALE ANALYSIS]</scope>
    <source>
        <tissue>Cervix carcinoma</tissue>
        <tissue>Erythroleukemia</tissue>
    </source>
</reference>
<reference key="11">
    <citation type="journal article" date="2014" name="J. Proteomics">
        <title>An enzyme assisted RP-RPLC approach for in-depth analysis of human liver phosphoproteome.</title>
        <authorList>
            <person name="Bian Y."/>
            <person name="Song C."/>
            <person name="Cheng K."/>
            <person name="Dong M."/>
            <person name="Wang F."/>
            <person name="Huang J."/>
            <person name="Sun D."/>
            <person name="Wang L."/>
            <person name="Ye M."/>
            <person name="Zou H."/>
        </authorList>
    </citation>
    <scope>PHOSPHORYLATION [LARGE SCALE ANALYSIS] AT SER-245</scope>
    <scope>IDENTIFICATION BY MASS SPECTROMETRY [LARGE SCALE ANALYSIS]</scope>
    <source>
        <tissue>Liver</tissue>
    </source>
</reference>
<reference key="12">
    <citation type="journal article" date="2015" name="Proteomics">
        <title>N-terminome analysis of the human mitochondrial proteome.</title>
        <authorList>
            <person name="Vaca Jacome A.S."/>
            <person name="Rabilloud T."/>
            <person name="Schaeffer-Reiss C."/>
            <person name="Rompais M."/>
            <person name="Ayoub D."/>
            <person name="Lane L."/>
            <person name="Bairoch A."/>
            <person name="Van Dorsselaer A."/>
            <person name="Carapito C."/>
        </authorList>
    </citation>
    <scope>IDENTIFICATION BY MASS SPECTROMETRY [LARGE SCALE ANALYSIS]</scope>
</reference>
<reference key="13">
    <citation type="journal article" date="2016" name="Oncogene">
        <title>STRIPAK complexes in cell signaling and cancer.</title>
        <authorList>
            <person name="Shi Z."/>
            <person name="Jiao S."/>
            <person name="Zhou Z."/>
        </authorList>
    </citation>
    <scope>REVIEW OF FUNCTION</scope>
</reference>
<sequence length="780" mass="86132">MDEQAGPGVFFSNNHPGAGGAKGLGPLAEAAAAGDGAAAAGAARAQYSLPGILHFLQHEWARFEVERAQWEVERAELQAQIAFLQGERKGQENLKKDLVRRIKMLEYALKQERAKYHKLKYGTELNQGDMKPPSYDSDEGNETEVQPQQNSQLMWKQGRQLLRQYLQEVGYTDTILDVKSKRVRALLGFSSDVTDREDDKNQDSVVNGTEAEVKETAMIAKSELTDSASVLDNFKFLESAAADFSDEDEDDDVDGREKSVIDTSTIVRKKALPDSGEDRDTKEALKEFDFLVTSEEGDNESRSAGDGTDWEKEDQCLMPEAWNVDQGVITKLKEQYKKERKGKKGVKRPNRSKLQDMLANLRDVDELPSLQPSVGSPSRPSSSRLPEHEINRADEVEALTFPPSSGKSFIMGADEALESELGLGELAGLTVANEADSLTYDIANNKDALRKTWNPKFTLRSHFDGIRALAFHPIEPVLITASEDHTLKMWNLQKTAPAKKSTSLDVEPIYTFRAHKGPVLCVVMSSNGEQCYSGGTDGLIQGWNTTNPNIDPYDSYDPSVLRGPLLGHTDAVWGLAYSAAHQRLLSCSADGTLRLWNTTEVAPALSVFNDTKELGIPASVDLVSSDPSHMVASFSKGYTSIFNMETQQRILTLESNVDTTANSSCQINRVISHPTLPISITAHEDRHIKFYDNNTGKLIHSMVAHLEAVTSLAVDPNGLYLMSGSHDCSIRLWNLESKTCIQEFTAHRKKFEESIHDVAFHPSKCYIASAGADALAKVFV</sequence>